<gene>
    <name evidence="1" type="primary">def</name>
    <name type="ordered locus">MS2201</name>
</gene>
<organism>
    <name type="scientific">Mannheimia succiniciproducens (strain KCTC 0769BP / MBEL55E)</name>
    <dbReference type="NCBI Taxonomy" id="221988"/>
    <lineage>
        <taxon>Bacteria</taxon>
        <taxon>Pseudomonadati</taxon>
        <taxon>Pseudomonadota</taxon>
        <taxon>Gammaproteobacteria</taxon>
        <taxon>Pasteurellales</taxon>
        <taxon>Pasteurellaceae</taxon>
        <taxon>Basfia</taxon>
    </lineage>
</organism>
<sequence>MSVLNVLIYPDERLKTIAEPVTEFNDELQTFIDDMFETMYQEEGIGLAATQVDVHKRVITIDITGEKTEQLVLINPELLDGEGETGIEEGCLSLPGLRGFVPRKEKVTVKALNRQGEEFTLHADGLLAICIQHEIDHLNGIVFADYLSPLKRNRMKEKLVKLQKQISRHQA</sequence>
<keyword id="KW-0378">Hydrolase</keyword>
<keyword id="KW-0408">Iron</keyword>
<keyword id="KW-0479">Metal-binding</keyword>
<keyword id="KW-0648">Protein biosynthesis</keyword>
<evidence type="ECO:0000255" key="1">
    <source>
        <dbReference type="HAMAP-Rule" id="MF_00163"/>
    </source>
</evidence>
<comment type="function">
    <text evidence="1">Removes the formyl group from the N-terminal Met of newly synthesized proteins. Requires at least a dipeptide for an efficient rate of reaction. N-terminal L-methionine is a prerequisite for activity but the enzyme has broad specificity at other positions.</text>
</comment>
<comment type="catalytic activity">
    <reaction evidence="1">
        <text>N-terminal N-formyl-L-methionyl-[peptide] + H2O = N-terminal L-methionyl-[peptide] + formate</text>
        <dbReference type="Rhea" id="RHEA:24420"/>
        <dbReference type="Rhea" id="RHEA-COMP:10639"/>
        <dbReference type="Rhea" id="RHEA-COMP:10640"/>
        <dbReference type="ChEBI" id="CHEBI:15377"/>
        <dbReference type="ChEBI" id="CHEBI:15740"/>
        <dbReference type="ChEBI" id="CHEBI:49298"/>
        <dbReference type="ChEBI" id="CHEBI:64731"/>
        <dbReference type="EC" id="3.5.1.88"/>
    </reaction>
</comment>
<comment type="cofactor">
    <cofactor evidence="1">
        <name>Fe(2+)</name>
        <dbReference type="ChEBI" id="CHEBI:29033"/>
    </cofactor>
    <text evidence="1">Binds 1 Fe(2+) ion.</text>
</comment>
<comment type="similarity">
    <text evidence="1">Belongs to the polypeptide deformylase family.</text>
</comment>
<reference key="1">
    <citation type="journal article" date="2004" name="Nat. Biotechnol.">
        <title>The genome sequence of the capnophilic rumen bacterium Mannheimia succiniciproducens.</title>
        <authorList>
            <person name="Hong S.H."/>
            <person name="Kim J.S."/>
            <person name="Lee S.Y."/>
            <person name="In Y.H."/>
            <person name="Choi S.S."/>
            <person name="Rih J.-K."/>
            <person name="Kim C.H."/>
            <person name="Jeong H."/>
            <person name="Hur C.G."/>
            <person name="Kim J.J."/>
        </authorList>
    </citation>
    <scope>NUCLEOTIDE SEQUENCE [LARGE SCALE GENOMIC DNA]</scope>
    <source>
        <strain>KCTC 0769BP / MBEL55E</strain>
    </source>
</reference>
<protein>
    <recommendedName>
        <fullName evidence="1">Peptide deformylase</fullName>
        <shortName evidence="1">PDF</shortName>
        <ecNumber evidence="1">3.5.1.88</ecNumber>
    </recommendedName>
    <alternativeName>
        <fullName evidence="1">Polypeptide deformylase</fullName>
    </alternativeName>
</protein>
<dbReference type="EC" id="3.5.1.88" evidence="1"/>
<dbReference type="EMBL" id="AE016827">
    <property type="protein sequence ID" value="AAU38808.1"/>
    <property type="molecule type" value="Genomic_DNA"/>
</dbReference>
<dbReference type="RefSeq" id="WP_011201352.1">
    <property type="nucleotide sequence ID" value="NC_006300.1"/>
</dbReference>
<dbReference type="SMR" id="Q65QF2"/>
<dbReference type="STRING" id="221988.MS2201"/>
<dbReference type="KEGG" id="msu:MS2201"/>
<dbReference type="eggNOG" id="COG0242">
    <property type="taxonomic scope" value="Bacteria"/>
</dbReference>
<dbReference type="HOGENOM" id="CLU_061901_2_1_6"/>
<dbReference type="OrthoDB" id="9804313at2"/>
<dbReference type="Proteomes" id="UP000000607">
    <property type="component" value="Chromosome"/>
</dbReference>
<dbReference type="GO" id="GO:0046872">
    <property type="term" value="F:metal ion binding"/>
    <property type="evidence" value="ECO:0007669"/>
    <property type="project" value="UniProtKB-KW"/>
</dbReference>
<dbReference type="GO" id="GO:0042586">
    <property type="term" value="F:peptide deformylase activity"/>
    <property type="evidence" value="ECO:0007669"/>
    <property type="project" value="UniProtKB-UniRule"/>
</dbReference>
<dbReference type="GO" id="GO:0043686">
    <property type="term" value="P:co-translational protein modification"/>
    <property type="evidence" value="ECO:0007669"/>
    <property type="project" value="TreeGrafter"/>
</dbReference>
<dbReference type="GO" id="GO:0006412">
    <property type="term" value="P:translation"/>
    <property type="evidence" value="ECO:0007669"/>
    <property type="project" value="UniProtKB-UniRule"/>
</dbReference>
<dbReference type="CDD" id="cd00487">
    <property type="entry name" value="Pep_deformylase"/>
    <property type="match status" value="1"/>
</dbReference>
<dbReference type="FunFam" id="3.90.45.10:FF:000001">
    <property type="entry name" value="Peptide deformylase"/>
    <property type="match status" value="1"/>
</dbReference>
<dbReference type="Gene3D" id="3.90.45.10">
    <property type="entry name" value="Peptide deformylase"/>
    <property type="match status" value="1"/>
</dbReference>
<dbReference type="HAMAP" id="MF_00163">
    <property type="entry name" value="Pep_deformylase"/>
    <property type="match status" value="1"/>
</dbReference>
<dbReference type="InterPro" id="IPR023635">
    <property type="entry name" value="Peptide_deformylase"/>
</dbReference>
<dbReference type="InterPro" id="IPR036821">
    <property type="entry name" value="Peptide_deformylase_sf"/>
</dbReference>
<dbReference type="NCBIfam" id="TIGR00079">
    <property type="entry name" value="pept_deformyl"/>
    <property type="match status" value="1"/>
</dbReference>
<dbReference type="NCBIfam" id="NF001159">
    <property type="entry name" value="PRK00150.1-3"/>
    <property type="match status" value="1"/>
</dbReference>
<dbReference type="PANTHER" id="PTHR10458">
    <property type="entry name" value="PEPTIDE DEFORMYLASE"/>
    <property type="match status" value="1"/>
</dbReference>
<dbReference type="PANTHER" id="PTHR10458:SF21">
    <property type="entry name" value="PEPTIDE DEFORMYLASE"/>
    <property type="match status" value="1"/>
</dbReference>
<dbReference type="Pfam" id="PF01327">
    <property type="entry name" value="Pep_deformylase"/>
    <property type="match status" value="1"/>
</dbReference>
<dbReference type="PIRSF" id="PIRSF004749">
    <property type="entry name" value="Pep_def"/>
    <property type="match status" value="1"/>
</dbReference>
<dbReference type="PRINTS" id="PR01576">
    <property type="entry name" value="PDEFORMYLASE"/>
</dbReference>
<dbReference type="SUPFAM" id="SSF56420">
    <property type="entry name" value="Peptide deformylase"/>
    <property type="match status" value="1"/>
</dbReference>
<feature type="chain" id="PRO_0000301053" description="Peptide deformylase">
    <location>
        <begin position="1"/>
        <end position="171"/>
    </location>
</feature>
<feature type="active site" evidence="1">
    <location>
        <position position="134"/>
    </location>
</feature>
<feature type="binding site" evidence="1">
    <location>
        <position position="91"/>
    </location>
    <ligand>
        <name>Fe cation</name>
        <dbReference type="ChEBI" id="CHEBI:24875"/>
    </ligand>
</feature>
<feature type="binding site" evidence="1">
    <location>
        <position position="133"/>
    </location>
    <ligand>
        <name>Fe cation</name>
        <dbReference type="ChEBI" id="CHEBI:24875"/>
    </ligand>
</feature>
<feature type="binding site" evidence="1">
    <location>
        <position position="137"/>
    </location>
    <ligand>
        <name>Fe cation</name>
        <dbReference type="ChEBI" id="CHEBI:24875"/>
    </ligand>
</feature>
<accession>Q65QF2</accession>
<proteinExistence type="inferred from homology"/>
<name>DEF_MANSM</name>